<dbReference type="EC" id="3.4.21.-"/>
<dbReference type="EMBL" id="AK122625">
    <property type="protein sequence ID" value="BAC85495.1"/>
    <property type="molecule type" value="mRNA"/>
</dbReference>
<dbReference type="EMBL" id="AC096727">
    <property type="status" value="NOT_ANNOTATED_CDS"/>
    <property type="molecule type" value="Genomic_DNA"/>
</dbReference>
<dbReference type="EMBL" id="AC107054">
    <property type="status" value="NOT_ANNOTATED_CDS"/>
    <property type="molecule type" value="Genomic_DNA"/>
</dbReference>
<dbReference type="CCDS" id="CCDS3520.1"/>
<dbReference type="RefSeq" id="NP_997290.2">
    <property type="nucleotide sequence ID" value="NM_207407.2"/>
</dbReference>
<dbReference type="RefSeq" id="XP_054205948.1">
    <property type="nucleotide sequence ID" value="XM_054349973.1"/>
</dbReference>
<dbReference type="SMR" id="Q6ZWK6"/>
<dbReference type="BioGRID" id="133038">
    <property type="interactions" value="2"/>
</dbReference>
<dbReference type="FunCoup" id="Q6ZWK6">
    <property type="interactions" value="11"/>
</dbReference>
<dbReference type="IntAct" id="Q6ZWK6">
    <property type="interactions" value="1"/>
</dbReference>
<dbReference type="MEROPS" id="S01.321"/>
<dbReference type="iPTMnet" id="Q6ZWK6"/>
<dbReference type="PhosphoSitePlus" id="Q6ZWK6"/>
<dbReference type="BioMuta" id="TMPRSS11F"/>
<dbReference type="DMDM" id="206729902"/>
<dbReference type="MassIVE" id="Q6ZWK6"/>
<dbReference type="PaxDb" id="9606-ENSP00000348639"/>
<dbReference type="PeptideAtlas" id="Q6ZWK6"/>
<dbReference type="Antibodypedia" id="12702">
    <property type="antibodies" value="36 antibodies from 15 providers"/>
</dbReference>
<dbReference type="DNASU" id="389208"/>
<dbReference type="Ensembl" id="ENST00000356291.3">
    <property type="protein sequence ID" value="ENSP00000348639.2"/>
    <property type="gene ID" value="ENSG00000198092.6"/>
</dbReference>
<dbReference type="GeneID" id="389208"/>
<dbReference type="KEGG" id="hsa:389208"/>
<dbReference type="MANE-Select" id="ENST00000356291.3">
    <property type="protein sequence ID" value="ENSP00000348639.2"/>
    <property type="RefSeq nucleotide sequence ID" value="NM_207407.2"/>
    <property type="RefSeq protein sequence ID" value="NP_997290.2"/>
</dbReference>
<dbReference type="UCSC" id="uc003hdt.2">
    <property type="organism name" value="human"/>
</dbReference>
<dbReference type="AGR" id="HGNC:29994"/>
<dbReference type="CTD" id="389208"/>
<dbReference type="DisGeNET" id="389208"/>
<dbReference type="GeneCards" id="TMPRSS11F"/>
<dbReference type="HGNC" id="HGNC:29994">
    <property type="gene designation" value="TMPRSS11F"/>
</dbReference>
<dbReference type="HPA" id="ENSG00000198092">
    <property type="expression patterns" value="Tissue enhanced (esophagus, skin, vagina)"/>
</dbReference>
<dbReference type="neXtProt" id="NX_Q6ZWK6"/>
<dbReference type="OpenTargets" id="ENSG00000198092"/>
<dbReference type="PharmGKB" id="PA142670730"/>
<dbReference type="VEuPathDB" id="HostDB:ENSG00000198092"/>
<dbReference type="eggNOG" id="KOG3627">
    <property type="taxonomic scope" value="Eukaryota"/>
</dbReference>
<dbReference type="GeneTree" id="ENSGT00940000161680"/>
<dbReference type="HOGENOM" id="CLU_006842_19_0_1"/>
<dbReference type="InParanoid" id="Q6ZWK6"/>
<dbReference type="OMA" id="NYGIRSS"/>
<dbReference type="OrthoDB" id="9425590at2759"/>
<dbReference type="PAN-GO" id="Q6ZWK6">
    <property type="GO annotations" value="0 GO annotations based on evolutionary models"/>
</dbReference>
<dbReference type="PhylomeDB" id="Q6ZWK6"/>
<dbReference type="TreeFam" id="TF351684"/>
<dbReference type="PathwayCommons" id="Q6ZWK6"/>
<dbReference type="SignaLink" id="Q6ZWK6"/>
<dbReference type="BioGRID-ORCS" id="389208">
    <property type="hits" value="15 hits in 1144 CRISPR screens"/>
</dbReference>
<dbReference type="ChiTaRS" id="TMPRSS11F">
    <property type="organism name" value="human"/>
</dbReference>
<dbReference type="GenomeRNAi" id="389208"/>
<dbReference type="Pharos" id="Q6ZWK6">
    <property type="development level" value="Tdark"/>
</dbReference>
<dbReference type="PRO" id="PR:Q6ZWK6"/>
<dbReference type="Proteomes" id="UP000005640">
    <property type="component" value="Chromosome 4"/>
</dbReference>
<dbReference type="RNAct" id="Q6ZWK6">
    <property type="molecule type" value="protein"/>
</dbReference>
<dbReference type="Bgee" id="ENSG00000198092">
    <property type="expression patterns" value="Expressed in lower esophagus mucosa and 25 other cell types or tissues"/>
</dbReference>
<dbReference type="GO" id="GO:0009986">
    <property type="term" value="C:cell surface"/>
    <property type="evidence" value="ECO:0000314"/>
    <property type="project" value="MGI"/>
</dbReference>
<dbReference type="GO" id="GO:0005576">
    <property type="term" value="C:extracellular region"/>
    <property type="evidence" value="ECO:0007669"/>
    <property type="project" value="InterPro"/>
</dbReference>
<dbReference type="GO" id="GO:0005886">
    <property type="term" value="C:plasma membrane"/>
    <property type="evidence" value="ECO:0007669"/>
    <property type="project" value="InterPro"/>
</dbReference>
<dbReference type="GO" id="GO:0004252">
    <property type="term" value="F:serine-type endopeptidase activity"/>
    <property type="evidence" value="ECO:0007669"/>
    <property type="project" value="InterPro"/>
</dbReference>
<dbReference type="GO" id="GO:0061436">
    <property type="term" value="P:establishment of skin barrier"/>
    <property type="evidence" value="ECO:0007669"/>
    <property type="project" value="Ensembl"/>
</dbReference>
<dbReference type="GO" id="GO:0006508">
    <property type="term" value="P:proteolysis"/>
    <property type="evidence" value="ECO:0007669"/>
    <property type="project" value="UniProtKB-KW"/>
</dbReference>
<dbReference type="CDD" id="cd00190">
    <property type="entry name" value="Tryp_SPc"/>
    <property type="match status" value="1"/>
</dbReference>
<dbReference type="FunFam" id="2.40.10.10:FF:000003">
    <property type="entry name" value="Transmembrane serine protease 3"/>
    <property type="match status" value="1"/>
</dbReference>
<dbReference type="Gene3D" id="3.30.70.960">
    <property type="entry name" value="SEA domain"/>
    <property type="match status" value="1"/>
</dbReference>
<dbReference type="Gene3D" id="2.40.10.10">
    <property type="entry name" value="Trypsin-like serine proteases"/>
    <property type="match status" value="2"/>
</dbReference>
<dbReference type="InterPro" id="IPR017329">
    <property type="entry name" value="Pept_S1A_HAT/DESC1"/>
</dbReference>
<dbReference type="InterPro" id="IPR009003">
    <property type="entry name" value="Peptidase_S1_PA"/>
</dbReference>
<dbReference type="InterPro" id="IPR043504">
    <property type="entry name" value="Peptidase_S1_PA_chymotrypsin"/>
</dbReference>
<dbReference type="InterPro" id="IPR001314">
    <property type="entry name" value="Peptidase_S1A"/>
</dbReference>
<dbReference type="InterPro" id="IPR000082">
    <property type="entry name" value="SEA_dom"/>
</dbReference>
<dbReference type="InterPro" id="IPR036364">
    <property type="entry name" value="SEA_dom_sf"/>
</dbReference>
<dbReference type="InterPro" id="IPR001254">
    <property type="entry name" value="Trypsin_dom"/>
</dbReference>
<dbReference type="InterPro" id="IPR018114">
    <property type="entry name" value="TRYPSIN_HIS"/>
</dbReference>
<dbReference type="InterPro" id="IPR033116">
    <property type="entry name" value="TRYPSIN_SER"/>
</dbReference>
<dbReference type="PANTHER" id="PTHR24252">
    <property type="entry name" value="ACROSIN-RELATED"/>
    <property type="match status" value="1"/>
</dbReference>
<dbReference type="PANTHER" id="PTHR24252:SF17">
    <property type="entry name" value="SUPPRESSOR OF TUMORIGENICITY 14 PROTEIN HOMOLOG-RELATED"/>
    <property type="match status" value="1"/>
</dbReference>
<dbReference type="Pfam" id="PF01390">
    <property type="entry name" value="SEA"/>
    <property type="match status" value="1"/>
</dbReference>
<dbReference type="Pfam" id="PF00089">
    <property type="entry name" value="Trypsin"/>
    <property type="match status" value="1"/>
</dbReference>
<dbReference type="PIRSF" id="PIRSF037941">
    <property type="entry name" value="TMPRSS11ABCDE"/>
    <property type="match status" value="1"/>
</dbReference>
<dbReference type="PRINTS" id="PR00722">
    <property type="entry name" value="CHYMOTRYPSIN"/>
</dbReference>
<dbReference type="SMART" id="SM00020">
    <property type="entry name" value="Tryp_SPc"/>
    <property type="match status" value="1"/>
</dbReference>
<dbReference type="SUPFAM" id="SSF82671">
    <property type="entry name" value="SEA domain"/>
    <property type="match status" value="1"/>
</dbReference>
<dbReference type="SUPFAM" id="SSF50494">
    <property type="entry name" value="Trypsin-like serine proteases"/>
    <property type="match status" value="1"/>
</dbReference>
<dbReference type="PROSITE" id="PS50024">
    <property type="entry name" value="SEA"/>
    <property type="match status" value="1"/>
</dbReference>
<dbReference type="PROSITE" id="PS50240">
    <property type="entry name" value="TRYPSIN_DOM"/>
    <property type="match status" value="1"/>
</dbReference>
<dbReference type="PROSITE" id="PS00134">
    <property type="entry name" value="TRYPSIN_HIS"/>
    <property type="match status" value="1"/>
</dbReference>
<dbReference type="PROSITE" id="PS00135">
    <property type="entry name" value="TRYPSIN_SER"/>
    <property type="match status" value="1"/>
</dbReference>
<accession>Q6ZWK6</accession>
<accession>A8MXX2</accession>
<organism>
    <name type="scientific">Homo sapiens</name>
    <name type="common">Human</name>
    <dbReference type="NCBI Taxonomy" id="9606"/>
    <lineage>
        <taxon>Eukaryota</taxon>
        <taxon>Metazoa</taxon>
        <taxon>Chordata</taxon>
        <taxon>Craniata</taxon>
        <taxon>Vertebrata</taxon>
        <taxon>Euteleostomi</taxon>
        <taxon>Mammalia</taxon>
        <taxon>Eutheria</taxon>
        <taxon>Euarchontoglires</taxon>
        <taxon>Primates</taxon>
        <taxon>Haplorrhini</taxon>
        <taxon>Catarrhini</taxon>
        <taxon>Hominidae</taxon>
        <taxon>Homo</taxon>
    </lineage>
</organism>
<protein>
    <recommendedName>
        <fullName>Transmembrane protease serine 11F</fullName>
        <ecNumber>3.4.21.-</ecNumber>
    </recommendedName>
    <alternativeName>
        <fullName>Airway trypsin-like protease 4</fullName>
    </alternativeName>
</protein>
<comment type="function">
    <text evidence="1">Probable serine protease.</text>
</comment>
<comment type="subcellular location">
    <subcellularLocation>
        <location evidence="5">Membrane</location>
        <topology evidence="5">Single-pass type II membrane protein</topology>
    </subcellularLocation>
</comment>
<comment type="similarity">
    <text evidence="4">Belongs to the peptidase S1 family.</text>
</comment>
<name>TM11F_HUMAN</name>
<proteinExistence type="evidence at protein level"/>
<reference key="1">
    <citation type="journal article" date="2004" name="Nat. Genet.">
        <title>Complete sequencing and characterization of 21,243 full-length human cDNAs.</title>
        <authorList>
            <person name="Ota T."/>
            <person name="Suzuki Y."/>
            <person name="Nishikawa T."/>
            <person name="Otsuki T."/>
            <person name="Sugiyama T."/>
            <person name="Irie R."/>
            <person name="Wakamatsu A."/>
            <person name="Hayashi K."/>
            <person name="Sato H."/>
            <person name="Nagai K."/>
            <person name="Kimura K."/>
            <person name="Makita H."/>
            <person name="Sekine M."/>
            <person name="Obayashi M."/>
            <person name="Nishi T."/>
            <person name="Shibahara T."/>
            <person name="Tanaka T."/>
            <person name="Ishii S."/>
            <person name="Yamamoto J."/>
            <person name="Saito K."/>
            <person name="Kawai Y."/>
            <person name="Isono Y."/>
            <person name="Nakamura Y."/>
            <person name="Nagahari K."/>
            <person name="Murakami K."/>
            <person name="Yasuda T."/>
            <person name="Iwayanagi T."/>
            <person name="Wagatsuma M."/>
            <person name="Shiratori A."/>
            <person name="Sudo H."/>
            <person name="Hosoiri T."/>
            <person name="Kaku Y."/>
            <person name="Kodaira H."/>
            <person name="Kondo H."/>
            <person name="Sugawara M."/>
            <person name="Takahashi M."/>
            <person name="Kanda K."/>
            <person name="Yokoi T."/>
            <person name="Furuya T."/>
            <person name="Kikkawa E."/>
            <person name="Omura Y."/>
            <person name="Abe K."/>
            <person name="Kamihara K."/>
            <person name="Katsuta N."/>
            <person name="Sato K."/>
            <person name="Tanikawa M."/>
            <person name="Yamazaki M."/>
            <person name="Ninomiya K."/>
            <person name="Ishibashi T."/>
            <person name="Yamashita H."/>
            <person name="Murakawa K."/>
            <person name="Fujimori K."/>
            <person name="Tanai H."/>
            <person name="Kimata M."/>
            <person name="Watanabe M."/>
            <person name="Hiraoka S."/>
            <person name="Chiba Y."/>
            <person name="Ishida S."/>
            <person name="Ono Y."/>
            <person name="Takiguchi S."/>
            <person name="Watanabe S."/>
            <person name="Yosida M."/>
            <person name="Hotuta T."/>
            <person name="Kusano J."/>
            <person name="Kanehori K."/>
            <person name="Takahashi-Fujii A."/>
            <person name="Hara H."/>
            <person name="Tanase T.-O."/>
            <person name="Nomura Y."/>
            <person name="Togiya S."/>
            <person name="Komai F."/>
            <person name="Hara R."/>
            <person name="Takeuchi K."/>
            <person name="Arita M."/>
            <person name="Imose N."/>
            <person name="Musashino K."/>
            <person name="Yuuki H."/>
            <person name="Oshima A."/>
            <person name="Sasaki N."/>
            <person name="Aotsuka S."/>
            <person name="Yoshikawa Y."/>
            <person name="Matsunawa H."/>
            <person name="Ichihara T."/>
            <person name="Shiohata N."/>
            <person name="Sano S."/>
            <person name="Moriya S."/>
            <person name="Momiyama H."/>
            <person name="Satoh N."/>
            <person name="Takami S."/>
            <person name="Terashima Y."/>
            <person name="Suzuki O."/>
            <person name="Nakagawa S."/>
            <person name="Senoh A."/>
            <person name="Mizoguchi H."/>
            <person name="Goto Y."/>
            <person name="Shimizu F."/>
            <person name="Wakebe H."/>
            <person name="Hishigaki H."/>
            <person name="Watanabe T."/>
            <person name="Sugiyama A."/>
            <person name="Takemoto M."/>
            <person name="Kawakami B."/>
            <person name="Yamazaki M."/>
            <person name="Watanabe K."/>
            <person name="Kumagai A."/>
            <person name="Itakura S."/>
            <person name="Fukuzumi Y."/>
            <person name="Fujimori Y."/>
            <person name="Komiyama M."/>
            <person name="Tashiro H."/>
            <person name="Tanigami A."/>
            <person name="Fujiwara T."/>
            <person name="Ono T."/>
            <person name="Yamada K."/>
            <person name="Fujii Y."/>
            <person name="Ozaki K."/>
            <person name="Hirao M."/>
            <person name="Ohmori Y."/>
            <person name="Kawabata A."/>
            <person name="Hikiji T."/>
            <person name="Kobatake N."/>
            <person name="Inagaki H."/>
            <person name="Ikema Y."/>
            <person name="Okamoto S."/>
            <person name="Okitani R."/>
            <person name="Kawakami T."/>
            <person name="Noguchi S."/>
            <person name="Itoh T."/>
            <person name="Shigeta K."/>
            <person name="Senba T."/>
            <person name="Matsumura K."/>
            <person name="Nakajima Y."/>
            <person name="Mizuno T."/>
            <person name="Morinaga M."/>
            <person name="Sasaki M."/>
            <person name="Togashi T."/>
            <person name="Oyama M."/>
            <person name="Hata H."/>
            <person name="Watanabe M."/>
            <person name="Komatsu T."/>
            <person name="Mizushima-Sugano J."/>
            <person name="Satoh T."/>
            <person name="Shirai Y."/>
            <person name="Takahashi Y."/>
            <person name="Nakagawa K."/>
            <person name="Okumura K."/>
            <person name="Nagase T."/>
            <person name="Nomura N."/>
            <person name="Kikuchi H."/>
            <person name="Masuho Y."/>
            <person name="Yamashita R."/>
            <person name="Nakai K."/>
            <person name="Yada T."/>
            <person name="Nakamura Y."/>
            <person name="Ohara O."/>
            <person name="Isogai T."/>
            <person name="Sugano S."/>
        </authorList>
    </citation>
    <scope>NUCLEOTIDE SEQUENCE [LARGE SCALE MRNA]</scope>
    <source>
        <tissue>Tongue</tissue>
    </source>
</reference>
<reference key="2">
    <citation type="journal article" date="2005" name="Nature">
        <title>Generation and annotation of the DNA sequences of human chromosomes 2 and 4.</title>
        <authorList>
            <person name="Hillier L.W."/>
            <person name="Graves T.A."/>
            <person name="Fulton R.S."/>
            <person name="Fulton L.A."/>
            <person name="Pepin K.H."/>
            <person name="Minx P."/>
            <person name="Wagner-McPherson C."/>
            <person name="Layman D."/>
            <person name="Wylie K."/>
            <person name="Sekhon M."/>
            <person name="Becker M.C."/>
            <person name="Fewell G.A."/>
            <person name="Delehaunty K.D."/>
            <person name="Miner T.L."/>
            <person name="Nash W.E."/>
            <person name="Kremitzki C."/>
            <person name="Oddy L."/>
            <person name="Du H."/>
            <person name="Sun H."/>
            <person name="Bradshaw-Cordum H."/>
            <person name="Ali J."/>
            <person name="Carter J."/>
            <person name="Cordes M."/>
            <person name="Harris A."/>
            <person name="Isak A."/>
            <person name="van Brunt A."/>
            <person name="Nguyen C."/>
            <person name="Du F."/>
            <person name="Courtney L."/>
            <person name="Kalicki J."/>
            <person name="Ozersky P."/>
            <person name="Abbott S."/>
            <person name="Armstrong J."/>
            <person name="Belter E.A."/>
            <person name="Caruso L."/>
            <person name="Cedroni M."/>
            <person name="Cotton M."/>
            <person name="Davidson T."/>
            <person name="Desai A."/>
            <person name="Elliott G."/>
            <person name="Erb T."/>
            <person name="Fronick C."/>
            <person name="Gaige T."/>
            <person name="Haakenson W."/>
            <person name="Haglund K."/>
            <person name="Holmes A."/>
            <person name="Harkins R."/>
            <person name="Kim K."/>
            <person name="Kruchowski S.S."/>
            <person name="Strong C.M."/>
            <person name="Grewal N."/>
            <person name="Goyea E."/>
            <person name="Hou S."/>
            <person name="Levy A."/>
            <person name="Martinka S."/>
            <person name="Mead K."/>
            <person name="McLellan M.D."/>
            <person name="Meyer R."/>
            <person name="Randall-Maher J."/>
            <person name="Tomlinson C."/>
            <person name="Dauphin-Kohlberg S."/>
            <person name="Kozlowicz-Reilly A."/>
            <person name="Shah N."/>
            <person name="Swearengen-Shahid S."/>
            <person name="Snider J."/>
            <person name="Strong J.T."/>
            <person name="Thompson J."/>
            <person name="Yoakum M."/>
            <person name="Leonard S."/>
            <person name="Pearman C."/>
            <person name="Trani L."/>
            <person name="Radionenko M."/>
            <person name="Waligorski J.E."/>
            <person name="Wang C."/>
            <person name="Rock S.M."/>
            <person name="Tin-Wollam A.-M."/>
            <person name="Maupin R."/>
            <person name="Latreille P."/>
            <person name="Wendl M.C."/>
            <person name="Yang S.-P."/>
            <person name="Pohl C."/>
            <person name="Wallis J.W."/>
            <person name="Spieth J."/>
            <person name="Bieri T.A."/>
            <person name="Berkowicz N."/>
            <person name="Nelson J.O."/>
            <person name="Osborne J."/>
            <person name="Ding L."/>
            <person name="Meyer R."/>
            <person name="Sabo A."/>
            <person name="Shotland Y."/>
            <person name="Sinha P."/>
            <person name="Wohldmann P.E."/>
            <person name="Cook L.L."/>
            <person name="Hickenbotham M.T."/>
            <person name="Eldred J."/>
            <person name="Williams D."/>
            <person name="Jones T.A."/>
            <person name="She X."/>
            <person name="Ciccarelli F.D."/>
            <person name="Izaurralde E."/>
            <person name="Taylor J."/>
            <person name="Schmutz J."/>
            <person name="Myers R.M."/>
            <person name="Cox D.R."/>
            <person name="Huang X."/>
            <person name="McPherson J.D."/>
            <person name="Mardis E.R."/>
            <person name="Clifton S.W."/>
            <person name="Warren W.C."/>
            <person name="Chinwalla A.T."/>
            <person name="Eddy S.R."/>
            <person name="Marra M.A."/>
            <person name="Ovcharenko I."/>
            <person name="Furey T.S."/>
            <person name="Miller W."/>
            <person name="Eichler E.E."/>
            <person name="Bork P."/>
            <person name="Suyama M."/>
            <person name="Torrents D."/>
            <person name="Waterston R.H."/>
            <person name="Wilson R.K."/>
        </authorList>
    </citation>
    <scope>NUCLEOTIDE SEQUENCE [LARGE SCALE GENOMIC DNA]</scope>
</reference>
<sequence length="438" mass="49410">MMYAPVEFSEAEFSRAEYQRKQQFWDSVRLALFTLAIVAIIGIAIGIVTHFVVEDDKSFYYLASFKVTNIKYKENYGIRSSREFIERSHQIERMMSRIFRHSSVGGRFIKSHVIKLSPDEQGVDILIVLIFRYPSTDSAEQIKKKIEKALYQSLKTKQLSLTINKPSFRLTPIDSKKMRNLLNSRCGIRMTSSNMPLPASSSTQRIVQGRETAMEGEWPWQASLQLIGSGHQCGASLISNTWLLTAAHCFWKNKDPTQWIATFGATITPPAVKRNVRKIILHENYHRETNENDIALVQLSTGVEFSNIVQRVCLPDSSIKLPPKTSVFVTGFGSIVDDGPIQNTLRQARVETISTDVCNRKDVYDGLITPGMLCAGFMEGKIDACKGDSGGPLVYDNHDIWYIVGIVSWGQSCALPKKPGVYTRVTKYRDWIASKTGM</sequence>
<gene>
    <name type="primary">TMPRSS11F</name>
    <name type="synonym">HATL4</name>
</gene>
<feature type="chain" id="PRO_0000299322" description="Transmembrane protease serine 11F">
    <location>
        <begin position="1"/>
        <end position="438"/>
    </location>
</feature>
<feature type="topological domain" description="Cytoplasmic" evidence="2">
    <location>
        <begin position="1"/>
        <end position="32"/>
    </location>
</feature>
<feature type="transmembrane region" description="Helical; Signal-anchor for type II membrane protein" evidence="2">
    <location>
        <begin position="33"/>
        <end position="53"/>
    </location>
</feature>
<feature type="topological domain" description="Extracellular" evidence="2">
    <location>
        <begin position="54"/>
        <end position="438"/>
    </location>
</feature>
<feature type="domain" description="SEA" evidence="3">
    <location>
        <begin position="57"/>
        <end position="175"/>
    </location>
</feature>
<feature type="domain" description="Peptidase S1" evidence="4">
    <location>
        <begin position="206"/>
        <end position="437"/>
    </location>
</feature>
<feature type="active site" description="Charge relay system" evidence="1">
    <location>
        <position position="248"/>
    </location>
</feature>
<feature type="active site" description="Charge relay system" evidence="1">
    <location>
        <position position="293"/>
    </location>
</feature>
<feature type="active site" description="Charge relay system" evidence="1">
    <location>
        <position position="389"/>
    </location>
</feature>
<feature type="disulfide bond" evidence="4">
    <location>
        <begin position="233"/>
        <end position="249"/>
    </location>
</feature>
<feature type="disulfide bond" evidence="4">
    <location>
        <begin position="358"/>
        <end position="374"/>
    </location>
</feature>
<feature type="disulfide bond" evidence="4">
    <location>
        <begin position="385"/>
        <end position="413"/>
    </location>
</feature>
<feature type="sequence variant" id="VAR_034800" description="In dbSNP:rs10030708.">
    <original>A</original>
    <variation>T</variation>
    <location>
        <position position="4"/>
    </location>
</feature>
<feature type="sequence variant" id="VAR_046636" description="In dbSNP:rs1438391.">
    <original>D</original>
    <variation>N</variation>
    <location>
        <position position="124"/>
    </location>
</feature>
<feature type="sequence conflict" description="In Ref. 1; BAC85495." evidence="5" ref="1">
    <original>I</original>
    <variation>L</variation>
    <location>
        <position position="163"/>
    </location>
</feature>
<evidence type="ECO:0000250" key="1"/>
<evidence type="ECO:0000255" key="2"/>
<evidence type="ECO:0000255" key="3">
    <source>
        <dbReference type="PROSITE-ProRule" id="PRU00188"/>
    </source>
</evidence>
<evidence type="ECO:0000255" key="4">
    <source>
        <dbReference type="PROSITE-ProRule" id="PRU00274"/>
    </source>
</evidence>
<evidence type="ECO:0000305" key="5"/>
<keyword id="KW-1015">Disulfide bond</keyword>
<keyword id="KW-0378">Hydrolase</keyword>
<keyword id="KW-0472">Membrane</keyword>
<keyword id="KW-0645">Protease</keyword>
<keyword id="KW-1267">Proteomics identification</keyword>
<keyword id="KW-1185">Reference proteome</keyword>
<keyword id="KW-0720">Serine protease</keyword>
<keyword id="KW-0735">Signal-anchor</keyword>
<keyword id="KW-0812">Transmembrane</keyword>
<keyword id="KW-1133">Transmembrane helix</keyword>